<evidence type="ECO:0000250" key="1">
    <source>
        <dbReference type="UniProtKB" id="P03705"/>
    </source>
</evidence>
<evidence type="ECO:0000250" key="2">
    <source>
        <dbReference type="UniProtKB" id="Q7Y2C1"/>
    </source>
</evidence>
<evidence type="ECO:0000255" key="3"/>
<evidence type="ECO:0000305" key="4"/>
<organismHost>
    <name type="scientific">Escherichia coli</name>
    <dbReference type="NCBI Taxonomy" id="562"/>
</organismHost>
<keyword id="KW-0204">Cytolysis</keyword>
<keyword id="KW-1030">Host cell inner membrane</keyword>
<keyword id="KW-0578">Host cell lysis by virus</keyword>
<keyword id="KW-1032">Host cell membrane</keyword>
<keyword id="KW-1043">Host membrane</keyword>
<keyword id="KW-0472">Membrane</keyword>
<keyword id="KW-1185">Reference proteome</keyword>
<keyword id="KW-0735">Signal-anchor</keyword>
<keyword id="KW-0812">Transmembrane</keyword>
<keyword id="KW-1133">Transmembrane helix</keyword>
<keyword id="KW-1188">Viral release from host cell</keyword>
<reference key="1">
    <citation type="journal article" date="2004" name="Virology">
        <title>The genome and proteome of coliphage T1.</title>
        <authorList>
            <person name="Roberts M.D."/>
            <person name="Martin N.L."/>
            <person name="Kropinski A.M."/>
        </authorList>
    </citation>
    <scope>NUCLEOTIDE SEQUENCE [GENOMIC DNA]</scope>
</reference>
<feature type="chain" id="PRO_0000429259" description="Holin">
    <location>
        <begin position="1"/>
        <end position="71"/>
    </location>
</feature>
<feature type="topological domain" description="Cytoplasmic" evidence="4">
    <location>
        <begin position="1"/>
        <end position="24"/>
    </location>
</feature>
<feature type="transmembrane region" description="Helical; Signal-anchor for type II membrane protein" evidence="3">
    <location>
        <begin position="25"/>
        <end position="45"/>
    </location>
</feature>
<feature type="topological domain" description="Periplasmic" evidence="4">
    <location>
        <begin position="46"/>
        <end position="71"/>
    </location>
</feature>
<dbReference type="EMBL" id="AY216660">
    <property type="protein sequence ID" value="AAP49986.1"/>
    <property type="molecule type" value="Genomic_DNA"/>
</dbReference>
<dbReference type="RefSeq" id="YP_003932.1">
    <property type="nucleotide sequence ID" value="NC_005833.1"/>
</dbReference>
<dbReference type="SMR" id="Q6XQ99"/>
<dbReference type="TCDB" id="1.E.37.1.1">
    <property type="family name" value="the phage t1 holin (t1 holin) family"/>
</dbReference>
<dbReference type="KEGG" id="vg:2772978"/>
<dbReference type="Proteomes" id="UP000001156">
    <property type="component" value="Genome"/>
</dbReference>
<dbReference type="GO" id="GO:0020002">
    <property type="term" value="C:host cell plasma membrane"/>
    <property type="evidence" value="ECO:0007669"/>
    <property type="project" value="UniProtKB-SubCell"/>
</dbReference>
<dbReference type="GO" id="GO:0016020">
    <property type="term" value="C:membrane"/>
    <property type="evidence" value="ECO:0007669"/>
    <property type="project" value="UniProtKB-KW"/>
</dbReference>
<dbReference type="GO" id="GO:0031640">
    <property type="term" value="P:killing of cells of another organism"/>
    <property type="evidence" value="ECO:0007669"/>
    <property type="project" value="UniProtKB-KW"/>
</dbReference>
<accession>Q6XQ99</accession>
<organism>
    <name type="scientific">Escherichia phage T1</name>
    <name type="common">Bacteriophage T1</name>
    <dbReference type="NCBI Taxonomy" id="2492962"/>
    <lineage>
        <taxon>Viruses</taxon>
        <taxon>Duplodnaviria</taxon>
        <taxon>Heunggongvirae</taxon>
        <taxon>Uroviricota</taxon>
        <taxon>Caudoviricetes</taxon>
        <taxon>Drexlerviridae</taxon>
        <taxon>Tunavirinae</taxon>
        <taxon>Tunavirus</taxon>
        <taxon>Tunavirus T1</taxon>
    </lineage>
</organism>
<proteinExistence type="inferred from homology"/>
<name>HOLIN_BPT1</name>
<gene>
    <name type="ORF">13</name>
</gene>
<protein>
    <recommendedName>
        <fullName evidence="4">Holin</fullName>
    </recommendedName>
    <alternativeName>
        <fullName evidence="4">Pinholin</fullName>
    </alternativeName>
</protein>
<sequence>MKEFLTAATSSTGGASLVGAATGQLYIAGATFICFLLFGAWGAYWKYRDSKAIQEALNDGDLNKALKIRGR</sequence>
<comment type="function">
    <text evidence="2">Accumulates harmlessly in the cytoplasmic membrane until it reaches a critical concentration that triggers the formation of nanometer-scale pores (pinholes) causing host cell membrane depolarization and endolysin refolding and release into the periplasmic space (By similarity). Once the pinholin has permeabilized the host cell membrane, the SAR-endolysin is released into the periplasm and breaks down the peptidoglycan layer (By similarity). Determines the precise timing of host cell lysis. Participates with the SAR-endolysin and the U-spanin protein in the sequential events which lead to the programmed host cell lysis releasing the mature viral particles from the host cell (By similarity).</text>
</comment>
<comment type="subunit">
    <text evidence="4">Homomultimer.</text>
</comment>
<comment type="subcellular location">
    <subcellularLocation>
        <location evidence="1">Host cell inner membrane</location>
        <topology evidence="3">Single-pass type II membrane protein</topology>
    </subcellularLocation>
</comment>